<name>ARGB_YERPE</name>
<reference key="1">
    <citation type="journal article" date="2001" name="Nature">
        <title>Genome sequence of Yersinia pestis, the causative agent of plague.</title>
        <authorList>
            <person name="Parkhill J."/>
            <person name="Wren B.W."/>
            <person name="Thomson N.R."/>
            <person name="Titball R.W."/>
            <person name="Holden M.T.G."/>
            <person name="Prentice M.B."/>
            <person name="Sebaihia M."/>
            <person name="James K.D."/>
            <person name="Churcher C.M."/>
            <person name="Mungall K.L."/>
            <person name="Baker S."/>
            <person name="Basham D."/>
            <person name="Bentley S.D."/>
            <person name="Brooks K."/>
            <person name="Cerdeno-Tarraga A.-M."/>
            <person name="Chillingworth T."/>
            <person name="Cronin A."/>
            <person name="Davies R.M."/>
            <person name="Davis P."/>
            <person name="Dougan G."/>
            <person name="Feltwell T."/>
            <person name="Hamlin N."/>
            <person name="Holroyd S."/>
            <person name="Jagels K."/>
            <person name="Karlyshev A.V."/>
            <person name="Leather S."/>
            <person name="Moule S."/>
            <person name="Oyston P.C.F."/>
            <person name="Quail M.A."/>
            <person name="Rutherford K.M."/>
            <person name="Simmonds M."/>
            <person name="Skelton J."/>
            <person name="Stevens K."/>
            <person name="Whitehead S."/>
            <person name="Barrell B.G."/>
        </authorList>
    </citation>
    <scope>NUCLEOTIDE SEQUENCE [LARGE SCALE GENOMIC DNA]</scope>
    <source>
        <strain>CO-92 / Biovar Orientalis</strain>
    </source>
</reference>
<reference key="2">
    <citation type="journal article" date="2002" name="J. Bacteriol.">
        <title>Genome sequence of Yersinia pestis KIM.</title>
        <authorList>
            <person name="Deng W."/>
            <person name="Burland V."/>
            <person name="Plunkett G. III"/>
            <person name="Boutin A."/>
            <person name="Mayhew G.F."/>
            <person name="Liss P."/>
            <person name="Perna N.T."/>
            <person name="Rose D.J."/>
            <person name="Mau B."/>
            <person name="Zhou S."/>
            <person name="Schwartz D.C."/>
            <person name="Fetherston J.D."/>
            <person name="Lindler L.E."/>
            <person name="Brubaker R.R."/>
            <person name="Plano G.V."/>
            <person name="Straley S.C."/>
            <person name="McDonough K.A."/>
            <person name="Nilles M.L."/>
            <person name="Matson J.S."/>
            <person name="Blattner F.R."/>
            <person name="Perry R.D."/>
        </authorList>
    </citation>
    <scope>NUCLEOTIDE SEQUENCE [LARGE SCALE GENOMIC DNA]</scope>
    <source>
        <strain>KIM10+ / Biovar Mediaevalis</strain>
    </source>
</reference>
<reference key="3">
    <citation type="journal article" date="2004" name="DNA Res.">
        <title>Complete genome sequence of Yersinia pestis strain 91001, an isolate avirulent to humans.</title>
        <authorList>
            <person name="Song Y."/>
            <person name="Tong Z."/>
            <person name="Wang J."/>
            <person name="Wang L."/>
            <person name="Guo Z."/>
            <person name="Han Y."/>
            <person name="Zhang J."/>
            <person name="Pei D."/>
            <person name="Zhou D."/>
            <person name="Qin H."/>
            <person name="Pang X."/>
            <person name="Han Y."/>
            <person name="Zhai J."/>
            <person name="Li M."/>
            <person name="Cui B."/>
            <person name="Qi Z."/>
            <person name="Jin L."/>
            <person name="Dai R."/>
            <person name="Chen F."/>
            <person name="Li S."/>
            <person name="Ye C."/>
            <person name="Du Z."/>
            <person name="Lin W."/>
            <person name="Wang J."/>
            <person name="Yu J."/>
            <person name="Yang H."/>
            <person name="Wang J."/>
            <person name="Huang P."/>
            <person name="Yang R."/>
        </authorList>
    </citation>
    <scope>NUCLEOTIDE SEQUENCE [LARGE SCALE GENOMIC DNA]</scope>
    <source>
        <strain>91001 / Biovar Mediaevalis</strain>
    </source>
</reference>
<proteinExistence type="evidence at protein level"/>
<evidence type="ECO:0000255" key="1">
    <source>
        <dbReference type="HAMAP-Rule" id="MF_00082"/>
    </source>
</evidence>
<evidence type="ECO:0000305" key="2"/>
<evidence type="ECO:0007829" key="3">
    <source>
        <dbReference type="PDB" id="3T7B"/>
    </source>
</evidence>
<keyword id="KW-0002">3D-structure</keyword>
<keyword id="KW-0028">Amino-acid biosynthesis</keyword>
<keyword id="KW-0055">Arginine biosynthesis</keyword>
<keyword id="KW-0067">ATP-binding</keyword>
<keyword id="KW-0963">Cytoplasm</keyword>
<keyword id="KW-0418">Kinase</keyword>
<keyword id="KW-0547">Nucleotide-binding</keyword>
<keyword id="KW-1185">Reference proteome</keyword>
<keyword id="KW-0808">Transferase</keyword>
<comment type="function">
    <text evidence="1">Catalyzes the ATP-dependent phosphorylation of N-acetyl-L-glutamate.</text>
</comment>
<comment type="catalytic activity">
    <reaction evidence="1">
        <text>N-acetyl-L-glutamate + ATP = N-acetyl-L-glutamyl 5-phosphate + ADP</text>
        <dbReference type="Rhea" id="RHEA:14629"/>
        <dbReference type="ChEBI" id="CHEBI:30616"/>
        <dbReference type="ChEBI" id="CHEBI:44337"/>
        <dbReference type="ChEBI" id="CHEBI:57936"/>
        <dbReference type="ChEBI" id="CHEBI:456216"/>
        <dbReference type="EC" id="2.7.2.8"/>
    </reaction>
</comment>
<comment type="pathway">
    <text evidence="1">Amino-acid biosynthesis; L-arginine biosynthesis; N(2)-acetyl-L-ornithine from L-glutamate: step 2/4.</text>
</comment>
<comment type="subunit">
    <text evidence="1">Homodimer.</text>
</comment>
<comment type="subcellular location">
    <subcellularLocation>
        <location evidence="1">Cytoplasm</location>
    </subcellularLocation>
</comment>
<comment type="similarity">
    <text evidence="1">Belongs to the acetylglutamate kinase family. ArgB subfamily.</text>
</comment>
<comment type="sequence caution" evidence="2">
    <conflict type="erroneous initiation">
        <sequence resource="EMBL-CDS" id="CAL22509"/>
    </conflict>
</comment>
<dbReference type="EC" id="2.7.2.8" evidence="1"/>
<dbReference type="EMBL" id="AL590842">
    <property type="protein sequence ID" value="CAL22509.1"/>
    <property type="status" value="ALT_INIT"/>
    <property type="molecule type" value="Genomic_DNA"/>
</dbReference>
<dbReference type="EMBL" id="AE009952">
    <property type="protein sequence ID" value="AAM83902.1"/>
    <property type="molecule type" value="Genomic_DNA"/>
</dbReference>
<dbReference type="EMBL" id="AE017042">
    <property type="protein sequence ID" value="AAS63294.1"/>
    <property type="molecule type" value="Genomic_DNA"/>
</dbReference>
<dbReference type="PIR" id="AB0478">
    <property type="entry name" value="AB0478"/>
</dbReference>
<dbReference type="RefSeq" id="YP_002348799.1">
    <property type="nucleotide sequence ID" value="NC_003143.1"/>
</dbReference>
<dbReference type="PDB" id="3T7B">
    <property type="method" value="X-ray"/>
    <property type="resolution" value="2.50 A"/>
    <property type="chains" value="A/B=2-258"/>
</dbReference>
<dbReference type="PDBsum" id="3T7B"/>
<dbReference type="SMR" id="Q8ZA87"/>
<dbReference type="STRING" id="214092.YPO3925"/>
<dbReference type="PaxDb" id="214092-YPO3925"/>
<dbReference type="EnsemblBacteria" id="AAS63294">
    <property type="protein sequence ID" value="AAS63294"/>
    <property type="gene ID" value="YP_3124"/>
</dbReference>
<dbReference type="KEGG" id="ype:YPO3925"/>
<dbReference type="KEGG" id="ypk:y0311"/>
<dbReference type="KEGG" id="ypm:YP_3124"/>
<dbReference type="PATRIC" id="fig|214092.21.peg.4454"/>
<dbReference type="eggNOG" id="COG0548">
    <property type="taxonomic scope" value="Bacteria"/>
</dbReference>
<dbReference type="HOGENOM" id="CLU_053680_1_1_6"/>
<dbReference type="OMA" id="EGLYEDW"/>
<dbReference type="UniPathway" id="UPA00068">
    <property type="reaction ID" value="UER00107"/>
</dbReference>
<dbReference type="EvolutionaryTrace" id="Q8ZA87"/>
<dbReference type="Proteomes" id="UP000000815">
    <property type="component" value="Chromosome"/>
</dbReference>
<dbReference type="Proteomes" id="UP000001019">
    <property type="component" value="Chromosome"/>
</dbReference>
<dbReference type="Proteomes" id="UP000002490">
    <property type="component" value="Chromosome"/>
</dbReference>
<dbReference type="GO" id="GO:0005737">
    <property type="term" value="C:cytoplasm"/>
    <property type="evidence" value="ECO:0007669"/>
    <property type="project" value="UniProtKB-SubCell"/>
</dbReference>
<dbReference type="GO" id="GO:0003991">
    <property type="term" value="F:acetylglutamate kinase activity"/>
    <property type="evidence" value="ECO:0000318"/>
    <property type="project" value="GO_Central"/>
</dbReference>
<dbReference type="GO" id="GO:0005524">
    <property type="term" value="F:ATP binding"/>
    <property type="evidence" value="ECO:0007669"/>
    <property type="project" value="UniProtKB-UniRule"/>
</dbReference>
<dbReference type="GO" id="GO:0042450">
    <property type="term" value="P:arginine biosynthetic process via ornithine"/>
    <property type="evidence" value="ECO:0007669"/>
    <property type="project" value="UniProtKB-UniRule"/>
</dbReference>
<dbReference type="GO" id="GO:0006526">
    <property type="term" value="P:L-arginine biosynthetic process"/>
    <property type="evidence" value="ECO:0000318"/>
    <property type="project" value="GO_Central"/>
</dbReference>
<dbReference type="CDD" id="cd04249">
    <property type="entry name" value="AAK_NAGK-NC"/>
    <property type="match status" value="1"/>
</dbReference>
<dbReference type="FunFam" id="3.40.1160.10:FF:000008">
    <property type="entry name" value="Acetylglutamate kinase"/>
    <property type="match status" value="1"/>
</dbReference>
<dbReference type="Gene3D" id="3.40.1160.10">
    <property type="entry name" value="Acetylglutamate kinase-like"/>
    <property type="match status" value="1"/>
</dbReference>
<dbReference type="HAMAP" id="MF_00082">
    <property type="entry name" value="ArgB"/>
    <property type="match status" value="1"/>
</dbReference>
<dbReference type="InterPro" id="IPR036393">
    <property type="entry name" value="AceGlu_kinase-like_sf"/>
</dbReference>
<dbReference type="InterPro" id="IPR004662">
    <property type="entry name" value="AcgluKinase_fam"/>
</dbReference>
<dbReference type="InterPro" id="IPR037528">
    <property type="entry name" value="ArgB"/>
</dbReference>
<dbReference type="InterPro" id="IPR001048">
    <property type="entry name" value="Asp/Glu/Uridylate_kinase"/>
</dbReference>
<dbReference type="InterPro" id="IPR041731">
    <property type="entry name" value="NAGK-NC"/>
</dbReference>
<dbReference type="NCBIfam" id="TIGR00761">
    <property type="entry name" value="argB"/>
    <property type="match status" value="1"/>
</dbReference>
<dbReference type="PANTHER" id="PTHR23342">
    <property type="entry name" value="N-ACETYLGLUTAMATE SYNTHASE"/>
    <property type="match status" value="1"/>
</dbReference>
<dbReference type="PANTHER" id="PTHR23342:SF0">
    <property type="entry name" value="N-ACETYLGLUTAMATE SYNTHASE, MITOCHONDRIAL"/>
    <property type="match status" value="1"/>
</dbReference>
<dbReference type="Pfam" id="PF00696">
    <property type="entry name" value="AA_kinase"/>
    <property type="match status" value="1"/>
</dbReference>
<dbReference type="PIRSF" id="PIRSF000728">
    <property type="entry name" value="NAGK"/>
    <property type="match status" value="1"/>
</dbReference>
<dbReference type="SUPFAM" id="SSF53633">
    <property type="entry name" value="Carbamate kinase-like"/>
    <property type="match status" value="1"/>
</dbReference>
<protein>
    <recommendedName>
        <fullName evidence="1">Acetylglutamate kinase</fullName>
        <ecNumber evidence="1">2.7.2.8</ecNumber>
    </recommendedName>
    <alternativeName>
        <fullName evidence="1">N-acetyl-L-glutamate 5-phosphotransferase</fullName>
    </alternativeName>
    <alternativeName>
        <fullName evidence="1">NAG kinase</fullName>
        <shortName evidence="1">NAGK</shortName>
    </alternativeName>
</protein>
<organism>
    <name type="scientific">Yersinia pestis</name>
    <dbReference type="NCBI Taxonomy" id="632"/>
    <lineage>
        <taxon>Bacteria</taxon>
        <taxon>Pseudomonadati</taxon>
        <taxon>Pseudomonadota</taxon>
        <taxon>Gammaproteobacteria</taxon>
        <taxon>Enterobacterales</taxon>
        <taxon>Yersiniaceae</taxon>
        <taxon>Yersinia</taxon>
    </lineage>
</organism>
<accession>Q8ZA87</accession>
<accession>Q0WA89</accession>
<gene>
    <name evidence="1" type="primary">argB</name>
    <name type="ordered locus">YPO3925</name>
    <name type="ordered locus">y0311</name>
    <name type="ordered locus">YP_3124</name>
</gene>
<feature type="chain" id="PRO_0000112689" description="Acetylglutamate kinase">
    <location>
        <begin position="1"/>
        <end position="258"/>
    </location>
</feature>
<feature type="binding site" evidence="1">
    <location>
        <begin position="44"/>
        <end position="45"/>
    </location>
    <ligand>
        <name>substrate</name>
    </ligand>
</feature>
<feature type="binding site" evidence="1">
    <location>
        <position position="66"/>
    </location>
    <ligand>
        <name>substrate</name>
    </ligand>
</feature>
<feature type="binding site" evidence="1">
    <location>
        <position position="158"/>
    </location>
    <ligand>
        <name>substrate</name>
    </ligand>
</feature>
<feature type="binding site" evidence="1">
    <location>
        <begin position="181"/>
        <end position="186"/>
    </location>
    <ligand>
        <name>ATP</name>
        <dbReference type="ChEBI" id="CHEBI:30616"/>
    </ligand>
</feature>
<feature type="binding site" evidence="1">
    <location>
        <begin position="209"/>
        <end position="211"/>
    </location>
    <ligand>
        <name>ATP</name>
        <dbReference type="ChEBI" id="CHEBI:30616"/>
    </ligand>
</feature>
<feature type="site" description="Transition state stabilizer" evidence="1">
    <location>
        <position position="8"/>
    </location>
</feature>
<feature type="site" description="Transition state stabilizer" evidence="1">
    <location>
        <position position="217"/>
    </location>
</feature>
<feature type="strand" evidence="3">
    <location>
        <begin position="5"/>
        <end position="9"/>
    </location>
</feature>
<feature type="helix" evidence="3">
    <location>
        <begin position="11"/>
        <end position="14"/>
    </location>
</feature>
<feature type="helix" evidence="3">
    <location>
        <begin position="17"/>
        <end position="33"/>
    </location>
</feature>
<feature type="strand" evidence="3">
    <location>
        <begin position="38"/>
        <end position="42"/>
    </location>
</feature>
<feature type="helix" evidence="3">
    <location>
        <begin position="46"/>
        <end position="54"/>
    </location>
</feature>
<feature type="strand" evidence="3">
    <location>
        <begin position="61"/>
        <end position="66"/>
    </location>
</feature>
<feature type="turn" evidence="3">
    <location>
        <begin position="70"/>
        <end position="72"/>
    </location>
</feature>
<feature type="helix" evidence="3">
    <location>
        <begin position="73"/>
        <end position="81"/>
    </location>
</feature>
<feature type="helix" evidence="3">
    <location>
        <begin position="83"/>
        <end position="94"/>
    </location>
</feature>
<feature type="strand" evidence="3">
    <location>
        <begin position="99"/>
        <end position="103"/>
    </location>
</feature>
<feature type="helix" evidence="3">
    <location>
        <begin position="106"/>
        <end position="108"/>
    </location>
</feature>
<feature type="strand" evidence="3">
    <location>
        <begin position="109"/>
        <end position="115"/>
    </location>
</feature>
<feature type="helix" evidence="3">
    <location>
        <begin position="117"/>
        <end position="119"/>
    </location>
</feature>
<feature type="strand" evidence="3">
    <location>
        <begin position="120"/>
        <end position="127"/>
    </location>
</feature>
<feature type="helix" evidence="3">
    <location>
        <begin position="131"/>
        <end position="138"/>
    </location>
</feature>
<feature type="strand" evidence="3">
    <location>
        <begin position="142"/>
        <end position="150"/>
    </location>
</feature>
<feature type="strand" evidence="3">
    <location>
        <begin position="156"/>
        <end position="159"/>
    </location>
</feature>
<feature type="helix" evidence="3">
    <location>
        <begin position="161"/>
        <end position="172"/>
    </location>
</feature>
<feature type="strand" evidence="3">
    <location>
        <begin position="175"/>
        <end position="181"/>
    </location>
</feature>
<feature type="strand" evidence="3">
    <location>
        <begin position="188"/>
        <end position="190"/>
    </location>
</feature>
<feature type="strand" evidence="3">
    <location>
        <begin position="194"/>
        <end position="197"/>
    </location>
</feature>
<feature type="helix" evidence="3">
    <location>
        <begin position="198"/>
        <end position="206"/>
    </location>
</feature>
<feature type="helix" evidence="3">
    <location>
        <begin position="215"/>
        <end position="228"/>
    </location>
</feature>
<feature type="strand" evidence="3">
    <location>
        <begin position="232"/>
        <end position="239"/>
    </location>
</feature>
<feature type="helix" evidence="3">
    <location>
        <begin position="243"/>
        <end position="247"/>
    </location>
</feature>
<feature type="strand" evidence="3">
    <location>
        <begin position="252"/>
        <end position="257"/>
    </location>
</feature>
<sequence>MMNPLVIKLGGVLLDSEEALERLFTALVTYREKHERPLVIMHGGGCLVDELMKRLALPVVKKNGLRVTPADQIDIITGALAGTANKTLLAWAVKHQINAVGLCLADGNTVTVTLLDAELGHVGKAQPGSAALVQTLLAAGYMPIISSIGITVEGQLMNVNADQAATALAATLGADLILLSDVSGILDGKGQRIAEMTAQKAEQLIAQGIITDGMVVKVNAALDAARSLGRPVDIASWRHSEQLPALFNGVPIGTRISV</sequence>